<dbReference type="EC" id="1.5.1.5" evidence="1"/>
<dbReference type="EC" id="3.5.4.9" evidence="1"/>
<dbReference type="EMBL" id="BX251412">
    <property type="protein sequence ID" value="CAD67315.1"/>
    <property type="status" value="ALT_INIT"/>
    <property type="molecule type" value="Genomic_DNA"/>
</dbReference>
<dbReference type="RefSeq" id="WP_033800015.1">
    <property type="nucleotide sequence ID" value="NC_004551.1"/>
</dbReference>
<dbReference type="SMR" id="Q83HF0"/>
<dbReference type="GeneID" id="67388433"/>
<dbReference type="KEGG" id="tws:TW653"/>
<dbReference type="HOGENOM" id="CLU_034045_3_0_11"/>
<dbReference type="UniPathway" id="UPA00193"/>
<dbReference type="GO" id="GO:0005829">
    <property type="term" value="C:cytosol"/>
    <property type="evidence" value="ECO:0007669"/>
    <property type="project" value="TreeGrafter"/>
</dbReference>
<dbReference type="GO" id="GO:0004477">
    <property type="term" value="F:methenyltetrahydrofolate cyclohydrolase activity"/>
    <property type="evidence" value="ECO:0007669"/>
    <property type="project" value="UniProtKB-UniRule"/>
</dbReference>
<dbReference type="GO" id="GO:0004488">
    <property type="term" value="F:methylenetetrahydrofolate dehydrogenase (NADP+) activity"/>
    <property type="evidence" value="ECO:0007669"/>
    <property type="project" value="UniProtKB-UniRule"/>
</dbReference>
<dbReference type="GO" id="GO:0000105">
    <property type="term" value="P:L-histidine biosynthetic process"/>
    <property type="evidence" value="ECO:0007669"/>
    <property type="project" value="UniProtKB-KW"/>
</dbReference>
<dbReference type="GO" id="GO:0009086">
    <property type="term" value="P:methionine biosynthetic process"/>
    <property type="evidence" value="ECO:0007669"/>
    <property type="project" value="UniProtKB-KW"/>
</dbReference>
<dbReference type="GO" id="GO:0006164">
    <property type="term" value="P:purine nucleotide biosynthetic process"/>
    <property type="evidence" value="ECO:0007669"/>
    <property type="project" value="UniProtKB-KW"/>
</dbReference>
<dbReference type="GO" id="GO:0035999">
    <property type="term" value="P:tetrahydrofolate interconversion"/>
    <property type="evidence" value="ECO:0007669"/>
    <property type="project" value="UniProtKB-UniRule"/>
</dbReference>
<dbReference type="CDD" id="cd01080">
    <property type="entry name" value="NAD_bind_m-THF_DH_Cyclohyd"/>
    <property type="match status" value="1"/>
</dbReference>
<dbReference type="FunFam" id="3.40.50.10860:FF:000005">
    <property type="entry name" value="C-1-tetrahydrofolate synthase, cytoplasmic, putative"/>
    <property type="match status" value="1"/>
</dbReference>
<dbReference type="Gene3D" id="3.40.50.10860">
    <property type="entry name" value="Leucine Dehydrogenase, chain A, domain 1"/>
    <property type="match status" value="1"/>
</dbReference>
<dbReference type="Gene3D" id="3.40.50.720">
    <property type="entry name" value="NAD(P)-binding Rossmann-like Domain"/>
    <property type="match status" value="1"/>
</dbReference>
<dbReference type="HAMAP" id="MF_01576">
    <property type="entry name" value="THF_DHG_CYH"/>
    <property type="match status" value="1"/>
</dbReference>
<dbReference type="InterPro" id="IPR046346">
    <property type="entry name" value="Aminoacid_DH-like_N_sf"/>
</dbReference>
<dbReference type="InterPro" id="IPR036291">
    <property type="entry name" value="NAD(P)-bd_dom_sf"/>
</dbReference>
<dbReference type="InterPro" id="IPR000672">
    <property type="entry name" value="THF_DH/CycHdrlase"/>
</dbReference>
<dbReference type="InterPro" id="IPR020630">
    <property type="entry name" value="THF_DH/CycHdrlase_cat_dom"/>
</dbReference>
<dbReference type="InterPro" id="IPR020867">
    <property type="entry name" value="THF_DH/CycHdrlase_CS"/>
</dbReference>
<dbReference type="InterPro" id="IPR020631">
    <property type="entry name" value="THF_DH/CycHdrlase_NAD-bd_dom"/>
</dbReference>
<dbReference type="PANTHER" id="PTHR48099:SF5">
    <property type="entry name" value="C-1-TETRAHYDROFOLATE SYNTHASE, CYTOPLASMIC"/>
    <property type="match status" value="1"/>
</dbReference>
<dbReference type="PANTHER" id="PTHR48099">
    <property type="entry name" value="C-1-TETRAHYDROFOLATE SYNTHASE, CYTOPLASMIC-RELATED"/>
    <property type="match status" value="1"/>
</dbReference>
<dbReference type="Pfam" id="PF00763">
    <property type="entry name" value="THF_DHG_CYH"/>
    <property type="match status" value="1"/>
</dbReference>
<dbReference type="Pfam" id="PF02882">
    <property type="entry name" value="THF_DHG_CYH_C"/>
    <property type="match status" value="1"/>
</dbReference>
<dbReference type="PRINTS" id="PR00085">
    <property type="entry name" value="THFDHDRGNASE"/>
</dbReference>
<dbReference type="SUPFAM" id="SSF53223">
    <property type="entry name" value="Aminoacid dehydrogenase-like, N-terminal domain"/>
    <property type="match status" value="1"/>
</dbReference>
<dbReference type="SUPFAM" id="SSF51735">
    <property type="entry name" value="NAD(P)-binding Rossmann-fold domains"/>
    <property type="match status" value="1"/>
</dbReference>
<dbReference type="PROSITE" id="PS00766">
    <property type="entry name" value="THF_DHG_CYH_1"/>
    <property type="match status" value="1"/>
</dbReference>
<name>FOLD_TROW8</name>
<gene>
    <name evidence="1" type="primary">folD</name>
    <name type="ordered locus">TW653</name>
</gene>
<reference key="1">
    <citation type="journal article" date="2003" name="Lancet">
        <title>Sequencing and analysis of the genome of the Whipple's disease bacterium Tropheryma whipplei.</title>
        <authorList>
            <person name="Bentley S.D."/>
            <person name="Maiwald M."/>
            <person name="Murphy L.D."/>
            <person name="Pallen M.J."/>
            <person name="Yeats C.A."/>
            <person name="Dover L.G."/>
            <person name="Norbertczak H.T."/>
            <person name="Besra G.S."/>
            <person name="Quail M.A."/>
            <person name="Harris D.E."/>
            <person name="von Herbay A."/>
            <person name="Goble A."/>
            <person name="Rutter S."/>
            <person name="Squares R."/>
            <person name="Squares S."/>
            <person name="Barrell B.G."/>
            <person name="Parkhill J."/>
            <person name="Relman D.A."/>
        </authorList>
    </citation>
    <scope>NUCLEOTIDE SEQUENCE [LARGE SCALE GENOMIC DNA]</scope>
    <source>
        <strain>TW08/27</strain>
    </source>
</reference>
<evidence type="ECO:0000255" key="1">
    <source>
        <dbReference type="HAMAP-Rule" id="MF_01576"/>
    </source>
</evidence>
<evidence type="ECO:0000305" key="2"/>
<organism>
    <name type="scientific">Tropheryma whipplei (strain TW08/27)</name>
    <name type="common">Whipple's bacillus</name>
    <dbReference type="NCBI Taxonomy" id="218496"/>
    <lineage>
        <taxon>Bacteria</taxon>
        <taxon>Bacillati</taxon>
        <taxon>Actinomycetota</taxon>
        <taxon>Actinomycetes</taxon>
        <taxon>Micrococcales</taxon>
        <taxon>Tropherymataceae</taxon>
        <taxon>Tropheryma</taxon>
    </lineage>
</organism>
<proteinExistence type="inferred from homology"/>
<accession>Q83HF0</accession>
<protein>
    <recommendedName>
        <fullName evidence="1">Bifunctional protein FolD</fullName>
    </recommendedName>
    <domain>
        <recommendedName>
            <fullName evidence="1">Methylenetetrahydrofolate dehydrogenase</fullName>
            <ecNumber evidence="1">1.5.1.5</ecNumber>
        </recommendedName>
    </domain>
    <domain>
        <recommendedName>
            <fullName evidence="1">Methenyltetrahydrofolate cyclohydrolase</fullName>
            <ecNumber evidence="1">3.5.4.9</ecNumber>
        </recommendedName>
    </domain>
</protein>
<sequence length="295" mass="31109">MVAKVLDGLAVSAGIFERLHRACCELENNGVCPKLATVLVGNNPASRSYVLSKHRDCNNIGIQSTLIELPANTSEKELISKVEILNASSDVSGIIVQLPLPESIDQNKVIEAINPDKDADGLHPLNLGYLVTGKQGIVPCTPAGIVKLLEAHRITLEGKTIAVIGRGTTVGRPLGILLSGKGVNATVINIHSRSRNISGLSRIADVVVACAGVKHIVEPSWIKPGAVVVDVGINQSGVSSSGKMILTGDVHPLTKNIASYISPVVGGVGPMTRAMLMSNVINLSERDFRKRLYAS</sequence>
<comment type="function">
    <text evidence="1">Catalyzes the oxidation of 5,10-methylenetetrahydrofolate to 5,10-methenyltetrahydrofolate and then the hydrolysis of 5,10-methenyltetrahydrofolate to 10-formyltetrahydrofolate.</text>
</comment>
<comment type="catalytic activity">
    <reaction evidence="1">
        <text>(6R)-5,10-methylene-5,6,7,8-tetrahydrofolate + NADP(+) = (6R)-5,10-methenyltetrahydrofolate + NADPH</text>
        <dbReference type="Rhea" id="RHEA:22812"/>
        <dbReference type="ChEBI" id="CHEBI:15636"/>
        <dbReference type="ChEBI" id="CHEBI:57455"/>
        <dbReference type="ChEBI" id="CHEBI:57783"/>
        <dbReference type="ChEBI" id="CHEBI:58349"/>
        <dbReference type="EC" id="1.5.1.5"/>
    </reaction>
</comment>
<comment type="catalytic activity">
    <reaction evidence="1">
        <text>(6R)-5,10-methenyltetrahydrofolate + H2O = (6R)-10-formyltetrahydrofolate + H(+)</text>
        <dbReference type="Rhea" id="RHEA:23700"/>
        <dbReference type="ChEBI" id="CHEBI:15377"/>
        <dbReference type="ChEBI" id="CHEBI:15378"/>
        <dbReference type="ChEBI" id="CHEBI:57455"/>
        <dbReference type="ChEBI" id="CHEBI:195366"/>
        <dbReference type="EC" id="3.5.4.9"/>
    </reaction>
</comment>
<comment type="pathway">
    <text evidence="1">One-carbon metabolism; tetrahydrofolate interconversion.</text>
</comment>
<comment type="subunit">
    <text evidence="1">Homodimer.</text>
</comment>
<comment type="similarity">
    <text evidence="1">Belongs to the tetrahydrofolate dehydrogenase/cyclohydrolase family.</text>
</comment>
<comment type="sequence caution" evidence="2">
    <conflict type="erroneous initiation">
        <sequence resource="EMBL-CDS" id="CAD67315"/>
    </conflict>
</comment>
<keyword id="KW-0028">Amino-acid biosynthesis</keyword>
<keyword id="KW-0368">Histidine biosynthesis</keyword>
<keyword id="KW-0378">Hydrolase</keyword>
<keyword id="KW-0486">Methionine biosynthesis</keyword>
<keyword id="KW-0511">Multifunctional enzyme</keyword>
<keyword id="KW-0521">NADP</keyword>
<keyword id="KW-0554">One-carbon metabolism</keyword>
<keyword id="KW-0560">Oxidoreductase</keyword>
<keyword id="KW-0658">Purine biosynthesis</keyword>
<feature type="chain" id="PRO_0000268554" description="Bifunctional protein FolD">
    <location>
        <begin position="1"/>
        <end position="295"/>
    </location>
</feature>
<feature type="binding site" evidence="1">
    <location>
        <begin position="165"/>
        <end position="167"/>
    </location>
    <ligand>
        <name>NADP(+)</name>
        <dbReference type="ChEBI" id="CHEBI:58349"/>
    </ligand>
</feature>
<feature type="binding site" evidence="1">
    <location>
        <position position="192"/>
    </location>
    <ligand>
        <name>NADP(+)</name>
        <dbReference type="ChEBI" id="CHEBI:58349"/>
    </ligand>
</feature>
<feature type="binding site" evidence="1">
    <location>
        <position position="233"/>
    </location>
    <ligand>
        <name>NADP(+)</name>
        <dbReference type="ChEBI" id="CHEBI:58349"/>
    </ligand>
</feature>